<gene>
    <name evidence="1" type="primary">rplL</name>
    <name type="ordered locus">HRM2_36330</name>
</gene>
<name>RL7_DESAH</name>
<keyword id="KW-1185">Reference proteome</keyword>
<keyword id="KW-0687">Ribonucleoprotein</keyword>
<keyword id="KW-0689">Ribosomal protein</keyword>
<reference key="1">
    <citation type="journal article" date="2009" name="Environ. Microbiol.">
        <title>Genome sequence of Desulfobacterium autotrophicum HRM2, a marine sulfate reducer oxidizing organic carbon completely to carbon dioxide.</title>
        <authorList>
            <person name="Strittmatter A.W."/>
            <person name="Liesegang H."/>
            <person name="Rabus R."/>
            <person name="Decker I."/>
            <person name="Amann J."/>
            <person name="Andres S."/>
            <person name="Henne A."/>
            <person name="Fricke W.F."/>
            <person name="Martinez-Arias R."/>
            <person name="Bartels D."/>
            <person name="Goesmann A."/>
            <person name="Krause L."/>
            <person name="Puehler A."/>
            <person name="Klenk H.P."/>
            <person name="Richter M."/>
            <person name="Schuler M."/>
            <person name="Gloeckner F.O."/>
            <person name="Meyerdierks A."/>
            <person name="Gottschalk G."/>
            <person name="Amann R."/>
        </authorList>
    </citation>
    <scope>NUCLEOTIDE SEQUENCE [LARGE SCALE GENOMIC DNA]</scope>
    <source>
        <strain>ATCC 43914 / DSM 3382 / VKM B-1955 / HRM2</strain>
    </source>
</reference>
<evidence type="ECO:0000255" key="1">
    <source>
        <dbReference type="HAMAP-Rule" id="MF_00368"/>
    </source>
</evidence>
<evidence type="ECO:0000305" key="2"/>
<organism>
    <name type="scientific">Desulforapulum autotrophicum (strain ATCC 43914 / DSM 3382 / VKM B-1955 / HRM2)</name>
    <name type="common">Desulfobacterium autotrophicum</name>
    <dbReference type="NCBI Taxonomy" id="177437"/>
    <lineage>
        <taxon>Bacteria</taxon>
        <taxon>Pseudomonadati</taxon>
        <taxon>Thermodesulfobacteriota</taxon>
        <taxon>Desulfobacteria</taxon>
        <taxon>Desulfobacterales</taxon>
        <taxon>Desulfobacteraceae</taxon>
        <taxon>Desulforapulum</taxon>
    </lineage>
</organism>
<protein>
    <recommendedName>
        <fullName evidence="1">Large ribosomal subunit protein bL12</fullName>
    </recommendedName>
    <alternativeName>
        <fullName evidence="2">50S ribosomal protein L7/L12</fullName>
    </alternativeName>
</protein>
<dbReference type="EMBL" id="CP001087">
    <property type="protein sequence ID" value="ACN16698.1"/>
    <property type="molecule type" value="Genomic_DNA"/>
</dbReference>
<dbReference type="RefSeq" id="WP_015905448.1">
    <property type="nucleotide sequence ID" value="NC_012108.1"/>
</dbReference>
<dbReference type="SMR" id="C0Q9Y0"/>
<dbReference type="STRING" id="177437.HRM2_36330"/>
<dbReference type="KEGG" id="dat:HRM2_36330"/>
<dbReference type="eggNOG" id="COG0222">
    <property type="taxonomic scope" value="Bacteria"/>
</dbReference>
<dbReference type="HOGENOM" id="CLU_086499_3_0_7"/>
<dbReference type="OrthoDB" id="9811748at2"/>
<dbReference type="Proteomes" id="UP000000442">
    <property type="component" value="Chromosome"/>
</dbReference>
<dbReference type="GO" id="GO:0022625">
    <property type="term" value="C:cytosolic large ribosomal subunit"/>
    <property type="evidence" value="ECO:0007669"/>
    <property type="project" value="TreeGrafter"/>
</dbReference>
<dbReference type="GO" id="GO:0003729">
    <property type="term" value="F:mRNA binding"/>
    <property type="evidence" value="ECO:0007669"/>
    <property type="project" value="TreeGrafter"/>
</dbReference>
<dbReference type="GO" id="GO:0003735">
    <property type="term" value="F:structural constituent of ribosome"/>
    <property type="evidence" value="ECO:0007669"/>
    <property type="project" value="InterPro"/>
</dbReference>
<dbReference type="GO" id="GO:0006412">
    <property type="term" value="P:translation"/>
    <property type="evidence" value="ECO:0007669"/>
    <property type="project" value="UniProtKB-UniRule"/>
</dbReference>
<dbReference type="CDD" id="cd00387">
    <property type="entry name" value="Ribosomal_L7_L12"/>
    <property type="match status" value="1"/>
</dbReference>
<dbReference type="FunFam" id="3.30.1390.10:FF:000001">
    <property type="entry name" value="50S ribosomal protein L7/L12"/>
    <property type="match status" value="1"/>
</dbReference>
<dbReference type="Gene3D" id="3.30.1390.10">
    <property type="match status" value="1"/>
</dbReference>
<dbReference type="Gene3D" id="1.20.5.710">
    <property type="entry name" value="Single helix bin"/>
    <property type="match status" value="1"/>
</dbReference>
<dbReference type="HAMAP" id="MF_00368">
    <property type="entry name" value="Ribosomal_bL12"/>
    <property type="match status" value="1"/>
</dbReference>
<dbReference type="InterPro" id="IPR000206">
    <property type="entry name" value="Ribosomal_bL12"/>
</dbReference>
<dbReference type="InterPro" id="IPR013823">
    <property type="entry name" value="Ribosomal_bL12_C"/>
</dbReference>
<dbReference type="InterPro" id="IPR014719">
    <property type="entry name" value="Ribosomal_bL12_C/ClpS-like"/>
</dbReference>
<dbReference type="InterPro" id="IPR008932">
    <property type="entry name" value="Ribosomal_bL12_oligo"/>
</dbReference>
<dbReference type="InterPro" id="IPR036235">
    <property type="entry name" value="Ribosomal_bL12_oligo_N_sf"/>
</dbReference>
<dbReference type="NCBIfam" id="TIGR00855">
    <property type="entry name" value="L12"/>
    <property type="match status" value="1"/>
</dbReference>
<dbReference type="PANTHER" id="PTHR45987">
    <property type="entry name" value="39S RIBOSOMAL PROTEIN L12"/>
    <property type="match status" value="1"/>
</dbReference>
<dbReference type="PANTHER" id="PTHR45987:SF4">
    <property type="entry name" value="LARGE RIBOSOMAL SUBUNIT PROTEIN BL12M"/>
    <property type="match status" value="1"/>
</dbReference>
<dbReference type="Pfam" id="PF00542">
    <property type="entry name" value="Ribosomal_L12"/>
    <property type="match status" value="1"/>
</dbReference>
<dbReference type="Pfam" id="PF16320">
    <property type="entry name" value="Ribosomal_L12_N"/>
    <property type="match status" value="1"/>
</dbReference>
<dbReference type="SUPFAM" id="SSF54736">
    <property type="entry name" value="ClpS-like"/>
    <property type="match status" value="1"/>
</dbReference>
<dbReference type="SUPFAM" id="SSF48300">
    <property type="entry name" value="Ribosomal protein L7/12, oligomerisation (N-terminal) domain"/>
    <property type="match status" value="1"/>
</dbReference>
<feature type="chain" id="PRO_1000205555" description="Large ribosomal subunit protein bL12">
    <location>
        <begin position="1"/>
        <end position="127"/>
    </location>
</feature>
<sequence>MADVTKDDVVEFIANMSVLELSELVKELEEKFGVSAAAPVAMMAAGGAADAGAAAEEQTEFDVILEAAGDKKIGVIKEVRAITGLGLKEAKALVDEAPKPVKEGIVKEEAEKIKAQLEAAGAQVSVK</sequence>
<comment type="function">
    <text evidence="1">Forms part of the ribosomal stalk which helps the ribosome interact with GTP-bound translation factors. Is thus essential for accurate translation.</text>
</comment>
<comment type="subunit">
    <text evidence="1">Homodimer. Part of the ribosomal stalk of the 50S ribosomal subunit. Forms a multimeric L10(L12)X complex, where L10 forms an elongated spine to which 2 to 4 L12 dimers bind in a sequential fashion. Binds GTP-bound translation factors.</text>
</comment>
<comment type="similarity">
    <text evidence="1">Belongs to the bacterial ribosomal protein bL12 family.</text>
</comment>
<proteinExistence type="inferred from homology"/>
<accession>C0Q9Y0</accession>